<comment type="function">
    <text evidence="1">Aspartyl-tRNA synthetase with relaxed tRNA specificity since it is able to aspartylate not only its cognate tRNA(Asp) but also tRNA(Asn). Reaction proceeds in two steps: L-aspartate is first activated by ATP to form Asp-AMP and then transferred to the acceptor end of tRNA(Asp/Asn).</text>
</comment>
<comment type="catalytic activity">
    <reaction evidence="1">
        <text>tRNA(Asx) + L-aspartate + ATP = L-aspartyl-tRNA(Asx) + AMP + diphosphate</text>
        <dbReference type="Rhea" id="RHEA:18349"/>
        <dbReference type="Rhea" id="RHEA-COMP:9710"/>
        <dbReference type="Rhea" id="RHEA-COMP:9711"/>
        <dbReference type="ChEBI" id="CHEBI:29991"/>
        <dbReference type="ChEBI" id="CHEBI:30616"/>
        <dbReference type="ChEBI" id="CHEBI:33019"/>
        <dbReference type="ChEBI" id="CHEBI:78442"/>
        <dbReference type="ChEBI" id="CHEBI:78516"/>
        <dbReference type="ChEBI" id="CHEBI:456215"/>
        <dbReference type="EC" id="6.1.1.23"/>
    </reaction>
</comment>
<comment type="subunit">
    <text evidence="1">Homodimer.</text>
</comment>
<comment type="subcellular location">
    <subcellularLocation>
        <location evidence="1">Cytoplasm</location>
    </subcellularLocation>
</comment>
<comment type="similarity">
    <text evidence="1">Belongs to the class-II aminoacyl-tRNA synthetase family. Type 1 subfamily.</text>
</comment>
<organism>
    <name type="scientific">Campylobacter jejuni subsp. jejuni serotype O:23/36 (strain 81-176)</name>
    <dbReference type="NCBI Taxonomy" id="354242"/>
    <lineage>
        <taxon>Bacteria</taxon>
        <taxon>Pseudomonadati</taxon>
        <taxon>Campylobacterota</taxon>
        <taxon>Epsilonproteobacteria</taxon>
        <taxon>Campylobacterales</taxon>
        <taxon>Campylobacteraceae</taxon>
        <taxon>Campylobacter</taxon>
    </lineage>
</organism>
<dbReference type="EC" id="6.1.1.23" evidence="1"/>
<dbReference type="EMBL" id="CP000538">
    <property type="protein sequence ID" value="EAQ73241.1"/>
    <property type="molecule type" value="Genomic_DNA"/>
</dbReference>
<dbReference type="RefSeq" id="WP_002869354.1">
    <property type="nucleotide sequence ID" value="NC_008787.1"/>
</dbReference>
<dbReference type="SMR" id="A1VZ00"/>
<dbReference type="KEGG" id="cjj:CJJ81176_0668"/>
<dbReference type="eggNOG" id="COG0173">
    <property type="taxonomic scope" value="Bacteria"/>
</dbReference>
<dbReference type="HOGENOM" id="CLU_014330_3_2_7"/>
<dbReference type="Proteomes" id="UP000000646">
    <property type="component" value="Chromosome"/>
</dbReference>
<dbReference type="GO" id="GO:0005737">
    <property type="term" value="C:cytoplasm"/>
    <property type="evidence" value="ECO:0007669"/>
    <property type="project" value="UniProtKB-SubCell"/>
</dbReference>
<dbReference type="GO" id="GO:0004815">
    <property type="term" value="F:aspartate-tRNA ligase activity"/>
    <property type="evidence" value="ECO:0007669"/>
    <property type="project" value="UniProtKB-UniRule"/>
</dbReference>
<dbReference type="GO" id="GO:0050560">
    <property type="term" value="F:aspartate-tRNA(Asn) ligase activity"/>
    <property type="evidence" value="ECO:0007669"/>
    <property type="project" value="UniProtKB-EC"/>
</dbReference>
<dbReference type="GO" id="GO:0005524">
    <property type="term" value="F:ATP binding"/>
    <property type="evidence" value="ECO:0007669"/>
    <property type="project" value="UniProtKB-UniRule"/>
</dbReference>
<dbReference type="GO" id="GO:0003676">
    <property type="term" value="F:nucleic acid binding"/>
    <property type="evidence" value="ECO:0007669"/>
    <property type="project" value="InterPro"/>
</dbReference>
<dbReference type="GO" id="GO:0006422">
    <property type="term" value="P:aspartyl-tRNA aminoacylation"/>
    <property type="evidence" value="ECO:0007669"/>
    <property type="project" value="UniProtKB-UniRule"/>
</dbReference>
<dbReference type="CDD" id="cd00777">
    <property type="entry name" value="AspRS_core"/>
    <property type="match status" value="1"/>
</dbReference>
<dbReference type="CDD" id="cd04317">
    <property type="entry name" value="EcAspRS_like_N"/>
    <property type="match status" value="1"/>
</dbReference>
<dbReference type="Gene3D" id="3.30.930.10">
    <property type="entry name" value="Bira Bifunctional Protein, Domain 2"/>
    <property type="match status" value="1"/>
</dbReference>
<dbReference type="Gene3D" id="3.30.1360.30">
    <property type="entry name" value="GAD-like domain"/>
    <property type="match status" value="1"/>
</dbReference>
<dbReference type="Gene3D" id="2.40.50.140">
    <property type="entry name" value="Nucleic acid-binding proteins"/>
    <property type="match status" value="1"/>
</dbReference>
<dbReference type="HAMAP" id="MF_00044">
    <property type="entry name" value="Asp_tRNA_synth_type1"/>
    <property type="match status" value="1"/>
</dbReference>
<dbReference type="InterPro" id="IPR004364">
    <property type="entry name" value="Aa-tRNA-synt_II"/>
</dbReference>
<dbReference type="InterPro" id="IPR006195">
    <property type="entry name" value="aa-tRNA-synth_II"/>
</dbReference>
<dbReference type="InterPro" id="IPR045864">
    <property type="entry name" value="aa-tRNA-synth_II/BPL/LPL"/>
</dbReference>
<dbReference type="InterPro" id="IPR004524">
    <property type="entry name" value="Asp-tRNA-ligase_1"/>
</dbReference>
<dbReference type="InterPro" id="IPR047089">
    <property type="entry name" value="Asp-tRNA-ligase_1_N"/>
</dbReference>
<dbReference type="InterPro" id="IPR002312">
    <property type="entry name" value="Asp/Asn-tRNA-synth_IIb"/>
</dbReference>
<dbReference type="InterPro" id="IPR047090">
    <property type="entry name" value="AspRS_core"/>
</dbReference>
<dbReference type="InterPro" id="IPR004115">
    <property type="entry name" value="GAD-like_sf"/>
</dbReference>
<dbReference type="InterPro" id="IPR029351">
    <property type="entry name" value="GAD_dom"/>
</dbReference>
<dbReference type="InterPro" id="IPR012340">
    <property type="entry name" value="NA-bd_OB-fold"/>
</dbReference>
<dbReference type="InterPro" id="IPR004365">
    <property type="entry name" value="NA-bd_OB_tRNA"/>
</dbReference>
<dbReference type="NCBIfam" id="TIGR00459">
    <property type="entry name" value="aspS_bact"/>
    <property type="match status" value="1"/>
</dbReference>
<dbReference type="NCBIfam" id="NF001750">
    <property type="entry name" value="PRK00476.1"/>
    <property type="match status" value="1"/>
</dbReference>
<dbReference type="PANTHER" id="PTHR22594:SF5">
    <property type="entry name" value="ASPARTATE--TRNA LIGASE, MITOCHONDRIAL"/>
    <property type="match status" value="1"/>
</dbReference>
<dbReference type="PANTHER" id="PTHR22594">
    <property type="entry name" value="ASPARTYL/LYSYL-TRNA SYNTHETASE"/>
    <property type="match status" value="1"/>
</dbReference>
<dbReference type="Pfam" id="PF02938">
    <property type="entry name" value="GAD"/>
    <property type="match status" value="1"/>
</dbReference>
<dbReference type="Pfam" id="PF00152">
    <property type="entry name" value="tRNA-synt_2"/>
    <property type="match status" value="1"/>
</dbReference>
<dbReference type="Pfam" id="PF01336">
    <property type="entry name" value="tRNA_anti-codon"/>
    <property type="match status" value="1"/>
</dbReference>
<dbReference type="PRINTS" id="PR01042">
    <property type="entry name" value="TRNASYNTHASP"/>
</dbReference>
<dbReference type="SUPFAM" id="SSF55681">
    <property type="entry name" value="Class II aaRS and biotin synthetases"/>
    <property type="match status" value="1"/>
</dbReference>
<dbReference type="SUPFAM" id="SSF55261">
    <property type="entry name" value="GAD domain-like"/>
    <property type="match status" value="1"/>
</dbReference>
<dbReference type="SUPFAM" id="SSF50249">
    <property type="entry name" value="Nucleic acid-binding proteins"/>
    <property type="match status" value="1"/>
</dbReference>
<dbReference type="PROSITE" id="PS50862">
    <property type="entry name" value="AA_TRNA_LIGASE_II"/>
    <property type="match status" value="1"/>
</dbReference>
<evidence type="ECO:0000255" key="1">
    <source>
        <dbReference type="HAMAP-Rule" id="MF_00044"/>
    </source>
</evidence>
<gene>
    <name evidence="1" type="primary">aspS</name>
    <name type="ordered locus">CJJ81176_0668</name>
</gene>
<feature type="chain" id="PRO_1000006658" description="Aspartate--tRNA(Asp/Asn) ligase">
    <location>
        <begin position="1"/>
        <end position="583"/>
    </location>
</feature>
<feature type="region of interest" description="Aspartate" evidence="1">
    <location>
        <begin position="197"/>
        <end position="200"/>
    </location>
</feature>
<feature type="binding site" evidence="1">
    <location>
        <position position="173"/>
    </location>
    <ligand>
        <name>L-aspartate</name>
        <dbReference type="ChEBI" id="CHEBI:29991"/>
    </ligand>
</feature>
<feature type="binding site" evidence="1">
    <location>
        <begin position="219"/>
        <end position="221"/>
    </location>
    <ligand>
        <name>ATP</name>
        <dbReference type="ChEBI" id="CHEBI:30616"/>
    </ligand>
</feature>
<feature type="binding site" evidence="1">
    <location>
        <position position="219"/>
    </location>
    <ligand>
        <name>L-aspartate</name>
        <dbReference type="ChEBI" id="CHEBI:29991"/>
    </ligand>
</feature>
<feature type="binding site" evidence="1">
    <location>
        <position position="228"/>
    </location>
    <ligand>
        <name>ATP</name>
        <dbReference type="ChEBI" id="CHEBI:30616"/>
    </ligand>
</feature>
<feature type="binding site" evidence="1">
    <location>
        <position position="447"/>
    </location>
    <ligand>
        <name>L-aspartate</name>
        <dbReference type="ChEBI" id="CHEBI:29991"/>
    </ligand>
</feature>
<feature type="binding site" evidence="1">
    <location>
        <position position="477"/>
    </location>
    <ligand>
        <name>ATP</name>
        <dbReference type="ChEBI" id="CHEBI:30616"/>
    </ligand>
</feature>
<feature type="binding site" evidence="1">
    <location>
        <position position="484"/>
    </location>
    <ligand>
        <name>L-aspartate</name>
        <dbReference type="ChEBI" id="CHEBI:29991"/>
    </ligand>
</feature>
<feature type="binding site" evidence="1">
    <location>
        <begin position="529"/>
        <end position="532"/>
    </location>
    <ligand>
        <name>ATP</name>
        <dbReference type="ChEBI" id="CHEBI:30616"/>
    </ligand>
</feature>
<feature type="site" description="Important for tRNA non-discrimination" evidence="1">
    <location>
        <position position="30"/>
    </location>
</feature>
<feature type="site" description="Important for tRNA non-discrimination" evidence="1">
    <location>
        <position position="82"/>
    </location>
</feature>
<protein>
    <recommendedName>
        <fullName evidence="1">Aspartate--tRNA(Asp/Asn) ligase</fullName>
        <ecNumber evidence="1">6.1.1.23</ecNumber>
    </recommendedName>
    <alternativeName>
        <fullName evidence="1">Aspartyl-tRNA synthetase</fullName>
        <shortName evidence="1">AspRS</shortName>
    </alternativeName>
    <alternativeName>
        <fullName evidence="1">Non-discriminating aspartyl-tRNA synthetase</fullName>
        <shortName evidence="1">ND-AspRS</shortName>
    </alternativeName>
</protein>
<proteinExistence type="inferred from homology"/>
<name>SYDND_CAMJJ</name>
<reference key="1">
    <citation type="submission" date="2006-12" db="EMBL/GenBank/DDBJ databases">
        <authorList>
            <person name="Fouts D.E."/>
            <person name="Nelson K.E."/>
            <person name="Sebastian Y."/>
        </authorList>
    </citation>
    <scope>NUCLEOTIDE SEQUENCE [LARGE SCALE GENOMIC DNA]</scope>
    <source>
        <strain>81-176</strain>
    </source>
</reference>
<keyword id="KW-0030">Aminoacyl-tRNA synthetase</keyword>
<keyword id="KW-0067">ATP-binding</keyword>
<keyword id="KW-0963">Cytoplasm</keyword>
<keyword id="KW-0436">Ligase</keyword>
<keyword id="KW-0547">Nucleotide-binding</keyword>
<keyword id="KW-0648">Protein biosynthesis</keyword>
<accession>A1VZ00</accession>
<sequence length="583" mass="66080">MRSHYNTDLGISHVGQSVKLCGWVNSYRDHGGVIFIDLRDRSGIIQLVCDPNDSKEAHEIASNARNEFVLIAEGAIRPRGEGLVNPKLKTGEIEVVVSKLTIENESAVPPFTIADESVNEELRLKYRFLDLRNPKLYENFALRSKACIAARNSLANMGFLEVETPILTKATPEGARDYLVPSRVHQGEFYALPQSPQLFKQLLMCSGFDRYFQIAKCFRDEDLRADRQPEFTQIDVEMSFCEQKDVINVAETFLKDIFKACGKEIQTPFRQMQYKDAMENYGSDKPDLRFDLKFIDVIDIFAKSNNEIFANIAKDTKKNRIKAIRVPKGDTIFSKRQMQRFEEFVRKFGAQGLAFIQVKEDGLKGPLCKFFSEEDLNELSKRCELEVGDVVFFGAGAKKTVLDYMGRFRIFLANELNLIDPNALEFLWVVDFPMFEQNDDGSYSAMHHPFTMPKNIDETDLEEISSIAYDVVLNGVELGGGSIRIHKNDIQQKVFKLLNIDEEQQKEKFGFLLDALSFGAPPHGGIAIGLDRLIMLVTGANSIREVIAFPKTQRAQCLMTDAPSPASNEAMRELGIKLRENIK</sequence>